<dbReference type="EMBL" id="AF008220">
    <property type="protein sequence ID" value="AAC00380.1"/>
    <property type="molecule type" value="Genomic_DNA"/>
</dbReference>
<dbReference type="EMBL" id="AL009126">
    <property type="protein sequence ID" value="CAB15026.1"/>
    <property type="molecule type" value="Genomic_DNA"/>
</dbReference>
<dbReference type="PIR" id="D69999">
    <property type="entry name" value="D69999"/>
</dbReference>
<dbReference type="RefSeq" id="NP_390926.1">
    <property type="nucleotide sequence ID" value="NC_000964.3"/>
</dbReference>
<dbReference type="RefSeq" id="WP_009968016.1">
    <property type="nucleotide sequence ID" value="NZ_OZ025638.1"/>
</dbReference>
<dbReference type="SMR" id="O35008"/>
<dbReference type="FunCoup" id="O35008">
    <property type="interactions" value="58"/>
</dbReference>
<dbReference type="STRING" id="224308.BSU30480"/>
<dbReference type="PaxDb" id="224308-BSU30480"/>
<dbReference type="EnsemblBacteria" id="CAB15026">
    <property type="protein sequence ID" value="CAB15026"/>
    <property type="gene ID" value="BSU_30480"/>
</dbReference>
<dbReference type="GeneID" id="937240"/>
<dbReference type="KEGG" id="bsu:BSU30480"/>
<dbReference type="PATRIC" id="fig|224308.179.peg.3306"/>
<dbReference type="eggNOG" id="COG1242">
    <property type="taxonomic scope" value="Bacteria"/>
</dbReference>
<dbReference type="InParanoid" id="O35008"/>
<dbReference type="OrthoDB" id="9801689at2"/>
<dbReference type="PhylomeDB" id="O35008"/>
<dbReference type="BioCyc" id="BSUB:BSU30480-MONOMER"/>
<dbReference type="Proteomes" id="UP000001570">
    <property type="component" value="Chromosome"/>
</dbReference>
<dbReference type="GO" id="GO:0051539">
    <property type="term" value="F:4 iron, 4 sulfur cluster binding"/>
    <property type="evidence" value="ECO:0007669"/>
    <property type="project" value="UniProtKB-KW"/>
</dbReference>
<dbReference type="GO" id="GO:0003824">
    <property type="term" value="F:catalytic activity"/>
    <property type="evidence" value="ECO:0007669"/>
    <property type="project" value="InterPro"/>
</dbReference>
<dbReference type="GO" id="GO:0046872">
    <property type="term" value="F:metal ion binding"/>
    <property type="evidence" value="ECO:0007669"/>
    <property type="project" value="UniProtKB-KW"/>
</dbReference>
<dbReference type="Gene3D" id="3.80.30.20">
    <property type="entry name" value="tm_1862 like domain"/>
    <property type="match status" value="1"/>
</dbReference>
<dbReference type="InterPro" id="IPR039661">
    <property type="entry name" value="ELP3"/>
</dbReference>
<dbReference type="InterPro" id="IPR006638">
    <property type="entry name" value="Elp3/MiaA/NifB-like_rSAM"/>
</dbReference>
<dbReference type="InterPro" id="IPR032432">
    <property type="entry name" value="Radical_SAM_C"/>
</dbReference>
<dbReference type="InterPro" id="IPR007197">
    <property type="entry name" value="rSAM"/>
</dbReference>
<dbReference type="InterPro" id="IPR023404">
    <property type="entry name" value="rSAM_horseshoe"/>
</dbReference>
<dbReference type="InterPro" id="IPR005911">
    <property type="entry name" value="YhcC-like"/>
</dbReference>
<dbReference type="NCBIfam" id="TIGR01212">
    <property type="entry name" value="TIGR01212 family radical SAM protein"/>
    <property type="match status" value="1"/>
</dbReference>
<dbReference type="PANTHER" id="PTHR11135">
    <property type="entry name" value="HISTONE ACETYLTRANSFERASE-RELATED"/>
    <property type="match status" value="1"/>
</dbReference>
<dbReference type="PANTHER" id="PTHR11135:SF1">
    <property type="entry name" value="PROTEIN YHCC"/>
    <property type="match status" value="1"/>
</dbReference>
<dbReference type="Pfam" id="PF04055">
    <property type="entry name" value="Radical_SAM"/>
    <property type="match status" value="1"/>
</dbReference>
<dbReference type="Pfam" id="PF16199">
    <property type="entry name" value="Radical_SAM_C"/>
    <property type="match status" value="1"/>
</dbReference>
<dbReference type="SFLD" id="SFLDG01086">
    <property type="entry name" value="elongater_protein-like"/>
    <property type="match status" value="1"/>
</dbReference>
<dbReference type="SFLD" id="SFLDS00029">
    <property type="entry name" value="Radical_SAM"/>
    <property type="match status" value="1"/>
</dbReference>
<dbReference type="SFLD" id="SFLDG01091">
    <property type="entry name" value="uncharacterized_CHP01210-like"/>
    <property type="match status" value="1"/>
</dbReference>
<dbReference type="SMART" id="SM00729">
    <property type="entry name" value="Elp3"/>
    <property type="match status" value="1"/>
</dbReference>
<dbReference type="SUPFAM" id="SSF102114">
    <property type="entry name" value="Radical SAM enzymes"/>
    <property type="match status" value="1"/>
</dbReference>
<dbReference type="PROSITE" id="PS51918">
    <property type="entry name" value="RADICAL_SAM"/>
    <property type="match status" value="1"/>
</dbReference>
<protein>
    <recommendedName>
        <fullName evidence="3">Uncharacterized protein YtqA</fullName>
    </recommendedName>
</protein>
<reference key="1">
    <citation type="journal article" date="1997" name="Microbiology">
        <title>Sequencing and functional annotation of the Bacillus subtilis genes in the 200 kb rrnB-dnaB region.</title>
        <authorList>
            <person name="Lapidus A."/>
            <person name="Galleron N."/>
            <person name="Sorokin A."/>
            <person name="Ehrlich S.D."/>
        </authorList>
    </citation>
    <scope>NUCLEOTIDE SEQUENCE [GENOMIC DNA]</scope>
    <source>
        <strain>168</strain>
    </source>
</reference>
<reference key="2">
    <citation type="journal article" date="1997" name="Nature">
        <title>The complete genome sequence of the Gram-positive bacterium Bacillus subtilis.</title>
        <authorList>
            <person name="Kunst F."/>
            <person name="Ogasawara N."/>
            <person name="Moszer I."/>
            <person name="Albertini A.M."/>
            <person name="Alloni G."/>
            <person name="Azevedo V."/>
            <person name="Bertero M.G."/>
            <person name="Bessieres P."/>
            <person name="Bolotin A."/>
            <person name="Borchert S."/>
            <person name="Borriss R."/>
            <person name="Boursier L."/>
            <person name="Brans A."/>
            <person name="Braun M."/>
            <person name="Brignell S.C."/>
            <person name="Bron S."/>
            <person name="Brouillet S."/>
            <person name="Bruschi C.V."/>
            <person name="Caldwell B."/>
            <person name="Capuano V."/>
            <person name="Carter N.M."/>
            <person name="Choi S.-K."/>
            <person name="Codani J.-J."/>
            <person name="Connerton I.F."/>
            <person name="Cummings N.J."/>
            <person name="Daniel R.A."/>
            <person name="Denizot F."/>
            <person name="Devine K.M."/>
            <person name="Duesterhoeft A."/>
            <person name="Ehrlich S.D."/>
            <person name="Emmerson P.T."/>
            <person name="Entian K.-D."/>
            <person name="Errington J."/>
            <person name="Fabret C."/>
            <person name="Ferrari E."/>
            <person name="Foulger D."/>
            <person name="Fritz C."/>
            <person name="Fujita M."/>
            <person name="Fujita Y."/>
            <person name="Fuma S."/>
            <person name="Galizzi A."/>
            <person name="Galleron N."/>
            <person name="Ghim S.-Y."/>
            <person name="Glaser P."/>
            <person name="Goffeau A."/>
            <person name="Golightly E.J."/>
            <person name="Grandi G."/>
            <person name="Guiseppi G."/>
            <person name="Guy B.J."/>
            <person name="Haga K."/>
            <person name="Haiech J."/>
            <person name="Harwood C.R."/>
            <person name="Henaut A."/>
            <person name="Hilbert H."/>
            <person name="Holsappel S."/>
            <person name="Hosono S."/>
            <person name="Hullo M.-F."/>
            <person name="Itaya M."/>
            <person name="Jones L.-M."/>
            <person name="Joris B."/>
            <person name="Karamata D."/>
            <person name="Kasahara Y."/>
            <person name="Klaerr-Blanchard M."/>
            <person name="Klein C."/>
            <person name="Kobayashi Y."/>
            <person name="Koetter P."/>
            <person name="Koningstein G."/>
            <person name="Krogh S."/>
            <person name="Kumano M."/>
            <person name="Kurita K."/>
            <person name="Lapidus A."/>
            <person name="Lardinois S."/>
            <person name="Lauber J."/>
            <person name="Lazarevic V."/>
            <person name="Lee S.-M."/>
            <person name="Levine A."/>
            <person name="Liu H."/>
            <person name="Masuda S."/>
            <person name="Mauel C."/>
            <person name="Medigue C."/>
            <person name="Medina N."/>
            <person name="Mellado R.P."/>
            <person name="Mizuno M."/>
            <person name="Moestl D."/>
            <person name="Nakai S."/>
            <person name="Noback M."/>
            <person name="Noone D."/>
            <person name="O'Reilly M."/>
            <person name="Ogawa K."/>
            <person name="Ogiwara A."/>
            <person name="Oudega B."/>
            <person name="Park S.-H."/>
            <person name="Parro V."/>
            <person name="Pohl T.M."/>
            <person name="Portetelle D."/>
            <person name="Porwollik S."/>
            <person name="Prescott A.M."/>
            <person name="Presecan E."/>
            <person name="Pujic P."/>
            <person name="Purnelle B."/>
            <person name="Rapoport G."/>
            <person name="Rey M."/>
            <person name="Reynolds S."/>
            <person name="Rieger M."/>
            <person name="Rivolta C."/>
            <person name="Rocha E."/>
            <person name="Roche B."/>
            <person name="Rose M."/>
            <person name="Sadaie Y."/>
            <person name="Sato T."/>
            <person name="Scanlan E."/>
            <person name="Schleich S."/>
            <person name="Schroeter R."/>
            <person name="Scoffone F."/>
            <person name="Sekiguchi J."/>
            <person name="Sekowska A."/>
            <person name="Seror S.J."/>
            <person name="Serror P."/>
            <person name="Shin B.-S."/>
            <person name="Soldo B."/>
            <person name="Sorokin A."/>
            <person name="Tacconi E."/>
            <person name="Takagi T."/>
            <person name="Takahashi H."/>
            <person name="Takemaru K."/>
            <person name="Takeuchi M."/>
            <person name="Tamakoshi A."/>
            <person name="Tanaka T."/>
            <person name="Terpstra P."/>
            <person name="Tognoni A."/>
            <person name="Tosato V."/>
            <person name="Uchiyama S."/>
            <person name="Vandenbol M."/>
            <person name="Vannier F."/>
            <person name="Vassarotti A."/>
            <person name="Viari A."/>
            <person name="Wambutt R."/>
            <person name="Wedler E."/>
            <person name="Wedler H."/>
            <person name="Weitzenegger T."/>
            <person name="Winters P."/>
            <person name="Wipat A."/>
            <person name="Yamamoto H."/>
            <person name="Yamane K."/>
            <person name="Yasumoto K."/>
            <person name="Yata K."/>
            <person name="Yoshida K."/>
            <person name="Yoshikawa H.-F."/>
            <person name="Zumstein E."/>
            <person name="Yoshikawa H."/>
            <person name="Danchin A."/>
        </authorList>
    </citation>
    <scope>NUCLEOTIDE SEQUENCE [LARGE SCALE GENOMIC DNA]</scope>
    <source>
        <strain>168</strain>
    </source>
</reference>
<name>YTQA_BACSU</name>
<accession>O35008</accession>
<accession>Q795P9</accession>
<proteinExistence type="inferred from homology"/>
<sequence>MMQNNPFPYSNTEKRYHTLNYHLREHFGHKVFKVALDGGFDCPNRDGTVAHGGCTFCSAAGSGDFAGNRTDDLITQFHDIKNRMHEKWKDGKYIAYFQAFTNTHAPVEVLREKFESVLALDDVVGISIATRPDCLPDDVVDYLAELNERTYLWVELGLQTVHERTALLINRAHDFNCYVEGVNKLRKHGIRVCSHIINGLPLEDRDMMMETAKAVADLDVQGIKIHLLHLLKGTPMVKQYEKGKLEFLSQDDYVQLVCDQLEIIPPEMIVHRITGDGPIELMIGPMWSVNKWEVLGAINKELENRGSYQGKFFQRLEEESAL</sequence>
<keyword id="KW-0004">4Fe-4S</keyword>
<keyword id="KW-0408">Iron</keyword>
<keyword id="KW-0411">Iron-sulfur</keyword>
<keyword id="KW-0479">Metal-binding</keyword>
<keyword id="KW-1185">Reference proteome</keyword>
<keyword id="KW-0949">S-adenosyl-L-methionine</keyword>
<comment type="cofactor">
    <cofactor evidence="1">
        <name>[4Fe-4S] cluster</name>
        <dbReference type="ChEBI" id="CHEBI:49883"/>
    </cofactor>
    <text evidence="1">Binds 1 [4Fe-4S] cluster. The cluster is coordinated with 3 cysteines and an exchangeable S-adenosyl-L-methionine.</text>
</comment>
<comment type="similarity">
    <text evidence="3">Belongs to the radical SAM superfamily.</text>
</comment>
<comment type="caution">
    <text evidence="3">The spacing between the conserved Cys residues used for the 4Fe-4S cluster is unusual (C-X11-CXXC instead of C-X3-CXXC); it is therefore unclear whether this protein will bind the cofactor.</text>
</comment>
<feature type="chain" id="PRO_0000386530" description="Uncharacterized protein YtqA">
    <location>
        <begin position="1"/>
        <end position="322"/>
    </location>
</feature>
<feature type="domain" description="Radical SAM core" evidence="2">
    <location>
        <begin position="26"/>
        <end position="267"/>
    </location>
</feature>
<feature type="binding site" evidence="1">
    <location>
        <position position="42"/>
    </location>
    <ligand>
        <name>[4Fe-4S] cluster</name>
        <dbReference type="ChEBI" id="CHEBI:49883"/>
        <note>4Fe-4S-S-AdoMet</note>
    </ligand>
</feature>
<feature type="binding site" evidence="1">
    <location>
        <position position="54"/>
    </location>
    <ligand>
        <name>[4Fe-4S] cluster</name>
        <dbReference type="ChEBI" id="CHEBI:49883"/>
        <note>4Fe-4S-S-AdoMet</note>
    </ligand>
</feature>
<feature type="binding site" evidence="1">
    <location>
        <position position="57"/>
    </location>
    <ligand>
        <name>[4Fe-4S] cluster</name>
        <dbReference type="ChEBI" id="CHEBI:49883"/>
        <note>4Fe-4S-S-AdoMet</note>
    </ligand>
</feature>
<gene>
    <name type="primary">ytqA</name>
    <name type="ordered locus">BSU30480</name>
</gene>
<evidence type="ECO:0000250" key="1">
    <source>
        <dbReference type="UniProtKB" id="Q9X0Z6"/>
    </source>
</evidence>
<evidence type="ECO:0000255" key="2">
    <source>
        <dbReference type="PROSITE-ProRule" id="PRU01266"/>
    </source>
</evidence>
<evidence type="ECO:0000305" key="3"/>
<organism>
    <name type="scientific">Bacillus subtilis (strain 168)</name>
    <dbReference type="NCBI Taxonomy" id="224308"/>
    <lineage>
        <taxon>Bacteria</taxon>
        <taxon>Bacillati</taxon>
        <taxon>Bacillota</taxon>
        <taxon>Bacilli</taxon>
        <taxon>Bacillales</taxon>
        <taxon>Bacillaceae</taxon>
        <taxon>Bacillus</taxon>
    </lineage>
</organism>